<gene>
    <name evidence="1" type="primary">rplW</name>
    <name type="ordered locus">MCCL_0197</name>
</gene>
<reference key="1">
    <citation type="journal article" date="2009" name="J. Bacteriol.">
        <title>Complete genome sequence of Macrococcus caseolyticus strain JCSCS5402, reflecting the ancestral genome of the human-pathogenic staphylococci.</title>
        <authorList>
            <person name="Baba T."/>
            <person name="Kuwahara-Arai K."/>
            <person name="Uchiyama I."/>
            <person name="Takeuchi F."/>
            <person name="Ito T."/>
            <person name="Hiramatsu K."/>
        </authorList>
    </citation>
    <scope>NUCLEOTIDE SEQUENCE [LARGE SCALE GENOMIC DNA]</scope>
    <source>
        <strain>JCSC5402</strain>
    </source>
</reference>
<organism>
    <name type="scientific">Macrococcus caseolyticus (strain JCSC5402)</name>
    <name type="common">Macrococcoides caseolyticum</name>
    <dbReference type="NCBI Taxonomy" id="458233"/>
    <lineage>
        <taxon>Bacteria</taxon>
        <taxon>Bacillati</taxon>
        <taxon>Bacillota</taxon>
        <taxon>Bacilli</taxon>
        <taxon>Bacillales</taxon>
        <taxon>Staphylococcaceae</taxon>
        <taxon>Macrococcoides</taxon>
    </lineage>
</organism>
<protein>
    <recommendedName>
        <fullName evidence="1">Large ribosomal subunit protein uL23</fullName>
    </recommendedName>
    <alternativeName>
        <fullName evidence="2">50S ribosomal protein L23</fullName>
    </alternativeName>
</protein>
<accession>B9E9J3</accession>
<evidence type="ECO:0000255" key="1">
    <source>
        <dbReference type="HAMAP-Rule" id="MF_01369"/>
    </source>
</evidence>
<evidence type="ECO:0000305" key="2"/>
<dbReference type="EMBL" id="AP009484">
    <property type="protein sequence ID" value="BAH16904.1"/>
    <property type="molecule type" value="Genomic_DNA"/>
</dbReference>
<dbReference type="RefSeq" id="WP_012656108.1">
    <property type="nucleotide sequence ID" value="NC_011999.1"/>
</dbReference>
<dbReference type="SMR" id="B9E9J3"/>
<dbReference type="STRING" id="458233.MCCL_0197"/>
<dbReference type="GeneID" id="35294472"/>
<dbReference type="GeneID" id="61130619"/>
<dbReference type="KEGG" id="mcl:MCCL_0197"/>
<dbReference type="eggNOG" id="COG0089">
    <property type="taxonomic scope" value="Bacteria"/>
</dbReference>
<dbReference type="HOGENOM" id="CLU_037562_3_2_9"/>
<dbReference type="OrthoDB" id="9793353at2"/>
<dbReference type="Proteomes" id="UP000001383">
    <property type="component" value="Chromosome"/>
</dbReference>
<dbReference type="GO" id="GO:1990904">
    <property type="term" value="C:ribonucleoprotein complex"/>
    <property type="evidence" value="ECO:0007669"/>
    <property type="project" value="UniProtKB-KW"/>
</dbReference>
<dbReference type="GO" id="GO:0005840">
    <property type="term" value="C:ribosome"/>
    <property type="evidence" value="ECO:0007669"/>
    <property type="project" value="UniProtKB-KW"/>
</dbReference>
<dbReference type="GO" id="GO:0019843">
    <property type="term" value="F:rRNA binding"/>
    <property type="evidence" value="ECO:0007669"/>
    <property type="project" value="UniProtKB-UniRule"/>
</dbReference>
<dbReference type="GO" id="GO:0003735">
    <property type="term" value="F:structural constituent of ribosome"/>
    <property type="evidence" value="ECO:0007669"/>
    <property type="project" value="InterPro"/>
</dbReference>
<dbReference type="GO" id="GO:0006412">
    <property type="term" value="P:translation"/>
    <property type="evidence" value="ECO:0007669"/>
    <property type="project" value="UniProtKB-UniRule"/>
</dbReference>
<dbReference type="FunFam" id="3.30.70.330:FF:000001">
    <property type="entry name" value="50S ribosomal protein L23"/>
    <property type="match status" value="1"/>
</dbReference>
<dbReference type="Gene3D" id="3.30.70.330">
    <property type="match status" value="1"/>
</dbReference>
<dbReference type="HAMAP" id="MF_01369_B">
    <property type="entry name" value="Ribosomal_uL23_B"/>
    <property type="match status" value="1"/>
</dbReference>
<dbReference type="InterPro" id="IPR012677">
    <property type="entry name" value="Nucleotide-bd_a/b_plait_sf"/>
</dbReference>
<dbReference type="InterPro" id="IPR013025">
    <property type="entry name" value="Ribosomal_uL23-like"/>
</dbReference>
<dbReference type="InterPro" id="IPR012678">
    <property type="entry name" value="Ribosomal_uL23/eL15/eS24_sf"/>
</dbReference>
<dbReference type="NCBIfam" id="NF004363">
    <property type="entry name" value="PRK05738.2-4"/>
    <property type="match status" value="1"/>
</dbReference>
<dbReference type="PANTHER" id="PTHR11620">
    <property type="entry name" value="60S RIBOSOMAL PROTEIN L23A"/>
    <property type="match status" value="1"/>
</dbReference>
<dbReference type="Pfam" id="PF00276">
    <property type="entry name" value="Ribosomal_L23"/>
    <property type="match status" value="1"/>
</dbReference>
<dbReference type="SUPFAM" id="SSF54189">
    <property type="entry name" value="Ribosomal proteins S24e, L23 and L15e"/>
    <property type="match status" value="1"/>
</dbReference>
<feature type="chain" id="PRO_1000184090" description="Large ribosomal subunit protein uL23">
    <location>
        <begin position="1"/>
        <end position="91"/>
    </location>
</feature>
<proteinExistence type="inferred from homology"/>
<name>RL23_MACCJ</name>
<comment type="function">
    <text evidence="1">One of the early assembly proteins it binds 23S rRNA. One of the proteins that surrounds the polypeptide exit tunnel on the outside of the ribosome. Forms the main docking site for trigger factor binding to the ribosome.</text>
</comment>
<comment type="subunit">
    <text evidence="1">Part of the 50S ribosomal subunit. Contacts protein L29, and trigger factor when it is bound to the ribosome.</text>
</comment>
<comment type="similarity">
    <text evidence="1">Belongs to the universal ribosomal protein uL23 family.</text>
</comment>
<sequence>MENRDIIKRPVITERSSEQMAQDKYTFDVDTRANKTQIKIAIEDIFNVKVDKVNVMNYKAKKKRVGRYNGYTNKRRKAIVTLKEGSIDFFN</sequence>
<keyword id="KW-1185">Reference proteome</keyword>
<keyword id="KW-0687">Ribonucleoprotein</keyword>
<keyword id="KW-0689">Ribosomal protein</keyword>
<keyword id="KW-0694">RNA-binding</keyword>
<keyword id="KW-0699">rRNA-binding</keyword>